<feature type="chain" id="PRO_0000205087" description="Arginine repressor">
    <location>
        <begin position="1"/>
        <end position="156"/>
    </location>
</feature>
<keyword id="KW-0028">Amino-acid biosynthesis</keyword>
<keyword id="KW-0055">Arginine biosynthesis</keyword>
<keyword id="KW-0963">Cytoplasm</keyword>
<keyword id="KW-0233">DNA recombination</keyword>
<keyword id="KW-0238">DNA-binding</keyword>
<keyword id="KW-1185">Reference proteome</keyword>
<keyword id="KW-0678">Repressor</keyword>
<keyword id="KW-0804">Transcription</keyword>
<keyword id="KW-0805">Transcription regulation</keyword>
<gene>
    <name type="primary">argR</name>
    <name type="ordered locus">Z4596</name>
    <name type="ordered locus">ECs4110</name>
</gene>
<proteinExistence type="inferred from homology"/>
<organism>
    <name type="scientific">Escherichia coli O157:H7</name>
    <dbReference type="NCBI Taxonomy" id="83334"/>
    <lineage>
        <taxon>Bacteria</taxon>
        <taxon>Pseudomonadati</taxon>
        <taxon>Pseudomonadota</taxon>
        <taxon>Gammaproteobacteria</taxon>
        <taxon>Enterobacterales</taxon>
        <taxon>Enterobacteriaceae</taxon>
        <taxon>Escherichia</taxon>
    </lineage>
</organism>
<dbReference type="EMBL" id="AE005174">
    <property type="protein sequence ID" value="AAG58365.1"/>
    <property type="molecule type" value="Genomic_DNA"/>
</dbReference>
<dbReference type="EMBL" id="BA000007">
    <property type="protein sequence ID" value="BAB37533.1"/>
    <property type="molecule type" value="Genomic_DNA"/>
</dbReference>
<dbReference type="PIR" id="A85988">
    <property type="entry name" value="A85988"/>
</dbReference>
<dbReference type="PIR" id="F91142">
    <property type="entry name" value="F91142"/>
</dbReference>
<dbReference type="RefSeq" id="NP_312137.1">
    <property type="nucleotide sequence ID" value="NC_002695.1"/>
</dbReference>
<dbReference type="RefSeq" id="WP_001257846.1">
    <property type="nucleotide sequence ID" value="NZ_VOAI01000014.1"/>
</dbReference>
<dbReference type="SMR" id="P0A6D1"/>
<dbReference type="STRING" id="155864.Z4596"/>
<dbReference type="GeneID" id="916041"/>
<dbReference type="GeneID" id="93778748"/>
<dbReference type="KEGG" id="ece:Z4596"/>
<dbReference type="KEGG" id="ecs:ECs_4110"/>
<dbReference type="PATRIC" id="fig|386585.9.peg.4291"/>
<dbReference type="eggNOG" id="COG1438">
    <property type="taxonomic scope" value="Bacteria"/>
</dbReference>
<dbReference type="HOGENOM" id="CLU_097103_2_0_6"/>
<dbReference type="OMA" id="MHAVKTR"/>
<dbReference type="UniPathway" id="UPA00068"/>
<dbReference type="Proteomes" id="UP000000558">
    <property type="component" value="Chromosome"/>
</dbReference>
<dbReference type="Proteomes" id="UP000002519">
    <property type="component" value="Chromosome"/>
</dbReference>
<dbReference type="GO" id="GO:0005737">
    <property type="term" value="C:cytoplasm"/>
    <property type="evidence" value="ECO:0007669"/>
    <property type="project" value="UniProtKB-SubCell"/>
</dbReference>
<dbReference type="GO" id="GO:0034618">
    <property type="term" value="F:arginine binding"/>
    <property type="evidence" value="ECO:0007669"/>
    <property type="project" value="InterPro"/>
</dbReference>
<dbReference type="GO" id="GO:0003677">
    <property type="term" value="F:DNA binding"/>
    <property type="evidence" value="ECO:0007669"/>
    <property type="project" value="UniProtKB-KW"/>
</dbReference>
<dbReference type="GO" id="GO:0003700">
    <property type="term" value="F:DNA-binding transcription factor activity"/>
    <property type="evidence" value="ECO:0007669"/>
    <property type="project" value="UniProtKB-UniRule"/>
</dbReference>
<dbReference type="GO" id="GO:0006310">
    <property type="term" value="P:DNA recombination"/>
    <property type="evidence" value="ECO:0007669"/>
    <property type="project" value="UniProtKB-KW"/>
</dbReference>
<dbReference type="GO" id="GO:0006526">
    <property type="term" value="P:L-arginine biosynthetic process"/>
    <property type="evidence" value="ECO:0007669"/>
    <property type="project" value="UniProtKB-UniPathway"/>
</dbReference>
<dbReference type="GO" id="GO:0051259">
    <property type="term" value="P:protein complex oligomerization"/>
    <property type="evidence" value="ECO:0007669"/>
    <property type="project" value="InterPro"/>
</dbReference>
<dbReference type="GO" id="GO:1900079">
    <property type="term" value="P:regulation of arginine biosynthetic process"/>
    <property type="evidence" value="ECO:0007669"/>
    <property type="project" value="UniProtKB-UniRule"/>
</dbReference>
<dbReference type="FunFam" id="1.10.10.10:FF:000074">
    <property type="entry name" value="Arginine repressor"/>
    <property type="match status" value="1"/>
</dbReference>
<dbReference type="FunFam" id="3.30.1360.40:FF:000004">
    <property type="entry name" value="Arginine repressor"/>
    <property type="match status" value="1"/>
</dbReference>
<dbReference type="Gene3D" id="3.30.1360.40">
    <property type="match status" value="1"/>
</dbReference>
<dbReference type="Gene3D" id="1.10.10.10">
    <property type="entry name" value="Winged helix-like DNA-binding domain superfamily/Winged helix DNA-binding domain"/>
    <property type="match status" value="1"/>
</dbReference>
<dbReference type="HAMAP" id="MF_00173">
    <property type="entry name" value="Arg_repressor"/>
    <property type="match status" value="1"/>
</dbReference>
<dbReference type="InterPro" id="IPR001669">
    <property type="entry name" value="Arg_repress"/>
</dbReference>
<dbReference type="InterPro" id="IPR020899">
    <property type="entry name" value="Arg_repress_C"/>
</dbReference>
<dbReference type="InterPro" id="IPR036251">
    <property type="entry name" value="Arg_repress_C_sf"/>
</dbReference>
<dbReference type="InterPro" id="IPR020900">
    <property type="entry name" value="Arg_repress_DNA-bd"/>
</dbReference>
<dbReference type="InterPro" id="IPR036388">
    <property type="entry name" value="WH-like_DNA-bd_sf"/>
</dbReference>
<dbReference type="InterPro" id="IPR036390">
    <property type="entry name" value="WH_DNA-bd_sf"/>
</dbReference>
<dbReference type="NCBIfam" id="TIGR01529">
    <property type="entry name" value="argR_whole"/>
    <property type="match status" value="1"/>
</dbReference>
<dbReference type="NCBIfam" id="NF003457">
    <property type="entry name" value="PRK05066.1"/>
    <property type="match status" value="1"/>
</dbReference>
<dbReference type="PANTHER" id="PTHR34471">
    <property type="entry name" value="ARGININE REPRESSOR"/>
    <property type="match status" value="1"/>
</dbReference>
<dbReference type="PANTHER" id="PTHR34471:SF1">
    <property type="entry name" value="ARGININE REPRESSOR"/>
    <property type="match status" value="1"/>
</dbReference>
<dbReference type="Pfam" id="PF01316">
    <property type="entry name" value="Arg_repressor"/>
    <property type="match status" value="1"/>
</dbReference>
<dbReference type="Pfam" id="PF02863">
    <property type="entry name" value="Arg_repressor_C"/>
    <property type="match status" value="1"/>
</dbReference>
<dbReference type="PRINTS" id="PR01467">
    <property type="entry name" value="ARGREPRESSOR"/>
</dbReference>
<dbReference type="SUPFAM" id="SSF55252">
    <property type="entry name" value="C-terminal domain of arginine repressor"/>
    <property type="match status" value="1"/>
</dbReference>
<dbReference type="SUPFAM" id="SSF46785">
    <property type="entry name" value="Winged helix' DNA-binding domain"/>
    <property type="match status" value="1"/>
</dbReference>
<reference key="1">
    <citation type="journal article" date="2001" name="Nature">
        <title>Genome sequence of enterohaemorrhagic Escherichia coli O157:H7.</title>
        <authorList>
            <person name="Perna N.T."/>
            <person name="Plunkett G. III"/>
            <person name="Burland V."/>
            <person name="Mau B."/>
            <person name="Glasner J.D."/>
            <person name="Rose D.J."/>
            <person name="Mayhew G.F."/>
            <person name="Evans P.S."/>
            <person name="Gregor J."/>
            <person name="Kirkpatrick H.A."/>
            <person name="Posfai G."/>
            <person name="Hackett J."/>
            <person name="Klink S."/>
            <person name="Boutin A."/>
            <person name="Shao Y."/>
            <person name="Miller L."/>
            <person name="Grotbeck E.J."/>
            <person name="Davis N.W."/>
            <person name="Lim A."/>
            <person name="Dimalanta E.T."/>
            <person name="Potamousis K."/>
            <person name="Apodaca J."/>
            <person name="Anantharaman T.S."/>
            <person name="Lin J."/>
            <person name="Yen G."/>
            <person name="Schwartz D.C."/>
            <person name="Welch R.A."/>
            <person name="Blattner F.R."/>
        </authorList>
    </citation>
    <scope>NUCLEOTIDE SEQUENCE [LARGE SCALE GENOMIC DNA]</scope>
    <source>
        <strain>O157:H7 / EDL933 / ATCC 700927 / EHEC</strain>
    </source>
</reference>
<reference key="2">
    <citation type="journal article" date="2001" name="DNA Res.">
        <title>Complete genome sequence of enterohemorrhagic Escherichia coli O157:H7 and genomic comparison with a laboratory strain K-12.</title>
        <authorList>
            <person name="Hayashi T."/>
            <person name="Makino K."/>
            <person name="Ohnishi M."/>
            <person name="Kurokawa K."/>
            <person name="Ishii K."/>
            <person name="Yokoyama K."/>
            <person name="Han C.-G."/>
            <person name="Ohtsubo E."/>
            <person name="Nakayama K."/>
            <person name="Murata T."/>
            <person name="Tanaka M."/>
            <person name="Tobe T."/>
            <person name="Iida T."/>
            <person name="Takami H."/>
            <person name="Honda T."/>
            <person name="Sasakawa C."/>
            <person name="Ogasawara N."/>
            <person name="Yasunaga T."/>
            <person name="Kuhara S."/>
            <person name="Shiba T."/>
            <person name="Hattori M."/>
            <person name="Shinagawa H."/>
        </authorList>
    </citation>
    <scope>NUCLEOTIDE SEQUENCE [LARGE SCALE GENOMIC DNA]</scope>
    <source>
        <strain>O157:H7 / Sakai / RIMD 0509952 / EHEC</strain>
    </source>
</reference>
<protein>
    <recommendedName>
        <fullName>Arginine repressor</fullName>
    </recommendedName>
</protein>
<name>ARGR_ECO57</name>
<accession>P0A6D1</accession>
<accession>P15282</accession>
<comment type="function">
    <text evidence="1">Regulates arginine biosynthesis genes.</text>
</comment>
<comment type="pathway">
    <text>Amino-acid biosynthesis; L-arginine biosynthesis [regulation].</text>
</comment>
<comment type="subunit">
    <text evidence="1">Homohexamer.</text>
</comment>
<comment type="subcellular location">
    <subcellularLocation>
        <location evidence="1">Cytoplasm</location>
    </subcellularLocation>
</comment>
<comment type="similarity">
    <text evidence="2">Belongs to the ArgR family.</text>
</comment>
<evidence type="ECO:0000250" key="1"/>
<evidence type="ECO:0000305" key="2"/>
<sequence>MRSSAKQEELVKAFKALLKEEKFSSQGEIVAALQEQGFDNINQSKVSRMLTKFGAVRTRNAKMEMVYCLPAELGVPTTSSPLKNLVLDIDYNDAVVVIHTSPGAAQLIARLLDSLGKAEGILGTIAGDDTIFTTPANGFTVKDLYEAILELFDQEL</sequence>